<dbReference type="EC" id="7.1.1.-" evidence="1"/>
<dbReference type="EMBL" id="AP008231">
    <property type="protein sequence ID" value="BAD78399.1"/>
    <property type="molecule type" value="Genomic_DNA"/>
</dbReference>
<dbReference type="RefSeq" id="WP_011242523.1">
    <property type="nucleotide sequence ID" value="NZ_CP085785.1"/>
</dbReference>
<dbReference type="SMR" id="Q5N5L9"/>
<dbReference type="GeneID" id="72430205"/>
<dbReference type="KEGG" id="syc:syc0209_c"/>
<dbReference type="eggNOG" id="COG1143">
    <property type="taxonomic scope" value="Bacteria"/>
</dbReference>
<dbReference type="Proteomes" id="UP000001175">
    <property type="component" value="Chromosome"/>
</dbReference>
<dbReference type="GO" id="GO:0031676">
    <property type="term" value="C:plasma membrane-derived thylakoid membrane"/>
    <property type="evidence" value="ECO:0007669"/>
    <property type="project" value="UniProtKB-SubCell"/>
</dbReference>
<dbReference type="GO" id="GO:0051539">
    <property type="term" value="F:4 iron, 4 sulfur cluster binding"/>
    <property type="evidence" value="ECO:0007669"/>
    <property type="project" value="UniProtKB-KW"/>
</dbReference>
<dbReference type="GO" id="GO:0005506">
    <property type="term" value="F:iron ion binding"/>
    <property type="evidence" value="ECO:0007669"/>
    <property type="project" value="UniProtKB-UniRule"/>
</dbReference>
<dbReference type="GO" id="GO:0008137">
    <property type="term" value="F:NADH dehydrogenase (ubiquinone) activity"/>
    <property type="evidence" value="ECO:0007669"/>
    <property type="project" value="InterPro"/>
</dbReference>
<dbReference type="GO" id="GO:0048038">
    <property type="term" value="F:quinone binding"/>
    <property type="evidence" value="ECO:0007669"/>
    <property type="project" value="UniProtKB-KW"/>
</dbReference>
<dbReference type="GO" id="GO:0019684">
    <property type="term" value="P:photosynthesis, light reaction"/>
    <property type="evidence" value="ECO:0007669"/>
    <property type="project" value="UniProtKB-UniRule"/>
</dbReference>
<dbReference type="Gene3D" id="3.30.70.3270">
    <property type="match status" value="1"/>
</dbReference>
<dbReference type="HAMAP" id="MF_01351">
    <property type="entry name" value="NDH1_NuoI"/>
    <property type="match status" value="1"/>
</dbReference>
<dbReference type="InterPro" id="IPR017896">
    <property type="entry name" value="4Fe4S_Fe-S-bd"/>
</dbReference>
<dbReference type="InterPro" id="IPR017900">
    <property type="entry name" value="4Fe4S_Fe_S_CS"/>
</dbReference>
<dbReference type="InterPro" id="IPR010226">
    <property type="entry name" value="NADH_quinone_OxRdtase_chainI"/>
</dbReference>
<dbReference type="InterPro" id="IPR004497">
    <property type="entry name" value="NDHI"/>
</dbReference>
<dbReference type="NCBIfam" id="TIGR00403">
    <property type="entry name" value="ndhI"/>
    <property type="match status" value="1"/>
</dbReference>
<dbReference type="NCBIfam" id="TIGR01971">
    <property type="entry name" value="NuoI"/>
    <property type="match status" value="1"/>
</dbReference>
<dbReference type="NCBIfam" id="NF004537">
    <property type="entry name" value="PRK05888.1-3"/>
    <property type="match status" value="1"/>
</dbReference>
<dbReference type="PANTHER" id="PTHR47275">
    <property type="entry name" value="NAD(P)H-QUINONE OXIDOREDUCTASE SUBUNIT I, CHLOROPLASTIC"/>
    <property type="match status" value="1"/>
</dbReference>
<dbReference type="PANTHER" id="PTHR47275:SF1">
    <property type="entry name" value="NAD(P)H-QUINONE OXIDOREDUCTASE SUBUNIT I, CHLOROPLASTIC"/>
    <property type="match status" value="1"/>
</dbReference>
<dbReference type="Pfam" id="PF12838">
    <property type="entry name" value="Fer4_7"/>
    <property type="match status" value="1"/>
</dbReference>
<dbReference type="SUPFAM" id="SSF54862">
    <property type="entry name" value="4Fe-4S ferredoxins"/>
    <property type="match status" value="1"/>
</dbReference>
<dbReference type="PROSITE" id="PS00198">
    <property type="entry name" value="4FE4S_FER_1"/>
    <property type="match status" value="2"/>
</dbReference>
<dbReference type="PROSITE" id="PS51379">
    <property type="entry name" value="4FE4S_FER_2"/>
    <property type="match status" value="2"/>
</dbReference>
<accession>Q5N5L9</accession>
<evidence type="ECO:0000255" key="1">
    <source>
        <dbReference type="HAMAP-Rule" id="MF_01351"/>
    </source>
</evidence>
<evidence type="ECO:0000256" key="2">
    <source>
        <dbReference type="SAM" id="MobiDB-lite"/>
    </source>
</evidence>
<organism>
    <name type="scientific">Synechococcus sp. (strain ATCC 27144 / PCC 6301 / SAUG 1402/1)</name>
    <name type="common">Anacystis nidulans</name>
    <dbReference type="NCBI Taxonomy" id="269084"/>
    <lineage>
        <taxon>Bacteria</taxon>
        <taxon>Bacillati</taxon>
        <taxon>Cyanobacteriota</taxon>
        <taxon>Cyanophyceae</taxon>
        <taxon>Synechococcales</taxon>
        <taxon>Synechococcaceae</taxon>
        <taxon>Synechococcus</taxon>
    </lineage>
</organism>
<reference key="1">
    <citation type="journal article" date="2007" name="Photosyn. Res.">
        <title>Complete nucleotide sequence of the freshwater unicellular cyanobacterium Synechococcus elongatus PCC 6301 chromosome: gene content and organization.</title>
        <authorList>
            <person name="Sugita C."/>
            <person name="Ogata K."/>
            <person name="Shikata M."/>
            <person name="Jikuya H."/>
            <person name="Takano J."/>
            <person name="Furumichi M."/>
            <person name="Kanehisa M."/>
            <person name="Omata T."/>
            <person name="Sugiura M."/>
            <person name="Sugita M."/>
        </authorList>
    </citation>
    <scope>NUCLEOTIDE SEQUENCE [LARGE SCALE GENOMIC DNA]</scope>
    <source>
        <strain>ATCC 27144 / PCC 6301 / SAUG 1402/1</strain>
    </source>
</reference>
<sequence>MLKFLKQVGDYAKESLQAAKAIGQGLGVTFDHMQRRPVTVQYPYEKLIPSERYRGRIHYEFDKCIACEVCVRVCPINLPVVDWVYNKETKKKDLKNYSIDFGACIFCGNCVEYCPTNCLSMTEEYELATYDRHELNYDNVALGRLPYKVTDDPMVTPFREFAYLPKGEYDPHVVPSDRPRAGQRPEELVDQYKQAAAANEEN</sequence>
<name>NDHI_SYNP6</name>
<keyword id="KW-0004">4Fe-4S</keyword>
<keyword id="KW-0408">Iron</keyword>
<keyword id="KW-0411">Iron-sulfur</keyword>
<keyword id="KW-0472">Membrane</keyword>
<keyword id="KW-0479">Metal-binding</keyword>
<keyword id="KW-0520">NAD</keyword>
<keyword id="KW-0521">NADP</keyword>
<keyword id="KW-0618">Plastoquinone</keyword>
<keyword id="KW-0874">Quinone</keyword>
<keyword id="KW-0677">Repeat</keyword>
<keyword id="KW-0793">Thylakoid</keyword>
<keyword id="KW-1278">Translocase</keyword>
<protein>
    <recommendedName>
        <fullName evidence="1">NAD(P)H-quinone oxidoreductase subunit I</fullName>
        <ecNumber evidence="1">7.1.1.-</ecNumber>
    </recommendedName>
    <alternativeName>
        <fullName evidence="1">NAD(P)H dehydrogenase I subunit I</fullName>
    </alternativeName>
    <alternativeName>
        <fullName evidence="1">NDH-1 subunit I</fullName>
        <shortName evidence="1">NDH-I</shortName>
    </alternativeName>
</protein>
<comment type="function">
    <text evidence="1">NDH-1 shuttles electrons from an unknown electron donor, via FMN and iron-sulfur (Fe-S) centers, to quinones in the respiratory and/or the photosynthetic chain. The immediate electron acceptor for the enzyme in this species is believed to be plastoquinone. Couples the redox reaction to proton translocation, and thus conserves the redox energy in a proton gradient.</text>
</comment>
<comment type="catalytic activity">
    <reaction evidence="1">
        <text>a plastoquinone + NADH + (n+1) H(+)(in) = a plastoquinol + NAD(+) + n H(+)(out)</text>
        <dbReference type="Rhea" id="RHEA:42608"/>
        <dbReference type="Rhea" id="RHEA-COMP:9561"/>
        <dbReference type="Rhea" id="RHEA-COMP:9562"/>
        <dbReference type="ChEBI" id="CHEBI:15378"/>
        <dbReference type="ChEBI" id="CHEBI:17757"/>
        <dbReference type="ChEBI" id="CHEBI:57540"/>
        <dbReference type="ChEBI" id="CHEBI:57945"/>
        <dbReference type="ChEBI" id="CHEBI:62192"/>
    </reaction>
</comment>
<comment type="catalytic activity">
    <reaction evidence="1">
        <text>a plastoquinone + NADPH + (n+1) H(+)(in) = a plastoquinol + NADP(+) + n H(+)(out)</text>
        <dbReference type="Rhea" id="RHEA:42612"/>
        <dbReference type="Rhea" id="RHEA-COMP:9561"/>
        <dbReference type="Rhea" id="RHEA-COMP:9562"/>
        <dbReference type="ChEBI" id="CHEBI:15378"/>
        <dbReference type="ChEBI" id="CHEBI:17757"/>
        <dbReference type="ChEBI" id="CHEBI:57783"/>
        <dbReference type="ChEBI" id="CHEBI:58349"/>
        <dbReference type="ChEBI" id="CHEBI:62192"/>
    </reaction>
</comment>
<comment type="cofactor">
    <cofactor evidence="1">
        <name>[4Fe-4S] cluster</name>
        <dbReference type="ChEBI" id="CHEBI:49883"/>
    </cofactor>
    <text evidence="1">Binds 2 [4Fe-4S] clusters per subunit.</text>
</comment>
<comment type="subunit">
    <text evidence="1">NDH-1 is composed of at least 11 different subunits.</text>
</comment>
<comment type="subcellular location">
    <subcellularLocation>
        <location evidence="1">Cellular thylakoid membrane</location>
        <topology evidence="1">Peripheral membrane protein</topology>
    </subcellularLocation>
</comment>
<comment type="similarity">
    <text evidence="1">Belongs to the complex I 23 kDa subunit family.</text>
</comment>
<gene>
    <name evidence="1" type="primary">ndhI</name>
    <name type="ordered locus">syc0209_c</name>
</gene>
<feature type="chain" id="PRO_0000245691" description="NAD(P)H-quinone oxidoreductase subunit I">
    <location>
        <begin position="1"/>
        <end position="202"/>
    </location>
</feature>
<feature type="domain" description="4Fe-4S ferredoxin-type 1" evidence="1">
    <location>
        <begin position="55"/>
        <end position="84"/>
    </location>
</feature>
<feature type="domain" description="4Fe-4S ferredoxin-type 2" evidence="1">
    <location>
        <begin position="95"/>
        <end position="124"/>
    </location>
</feature>
<feature type="region of interest" description="Disordered" evidence="2">
    <location>
        <begin position="168"/>
        <end position="202"/>
    </location>
</feature>
<feature type="compositionally biased region" description="Basic and acidic residues" evidence="2">
    <location>
        <begin position="168"/>
        <end position="187"/>
    </location>
</feature>
<feature type="binding site" evidence="1">
    <location>
        <position position="64"/>
    </location>
    <ligand>
        <name>[4Fe-4S] cluster</name>
        <dbReference type="ChEBI" id="CHEBI:49883"/>
        <label>1</label>
    </ligand>
</feature>
<feature type="binding site" evidence="1">
    <location>
        <position position="67"/>
    </location>
    <ligand>
        <name>[4Fe-4S] cluster</name>
        <dbReference type="ChEBI" id="CHEBI:49883"/>
        <label>1</label>
    </ligand>
</feature>
<feature type="binding site" evidence="1">
    <location>
        <position position="70"/>
    </location>
    <ligand>
        <name>[4Fe-4S] cluster</name>
        <dbReference type="ChEBI" id="CHEBI:49883"/>
        <label>1</label>
    </ligand>
</feature>
<feature type="binding site" evidence="1">
    <location>
        <position position="74"/>
    </location>
    <ligand>
        <name>[4Fe-4S] cluster</name>
        <dbReference type="ChEBI" id="CHEBI:49883"/>
        <label>2</label>
    </ligand>
</feature>
<feature type="binding site" evidence="1">
    <location>
        <position position="104"/>
    </location>
    <ligand>
        <name>[4Fe-4S] cluster</name>
        <dbReference type="ChEBI" id="CHEBI:49883"/>
        <label>2</label>
    </ligand>
</feature>
<feature type="binding site" evidence="1">
    <location>
        <position position="107"/>
    </location>
    <ligand>
        <name>[4Fe-4S] cluster</name>
        <dbReference type="ChEBI" id="CHEBI:49883"/>
        <label>2</label>
    </ligand>
</feature>
<feature type="binding site" evidence="1">
    <location>
        <position position="110"/>
    </location>
    <ligand>
        <name>[4Fe-4S] cluster</name>
        <dbReference type="ChEBI" id="CHEBI:49883"/>
        <label>2</label>
    </ligand>
</feature>
<feature type="binding site" evidence="1">
    <location>
        <position position="114"/>
    </location>
    <ligand>
        <name>[4Fe-4S] cluster</name>
        <dbReference type="ChEBI" id="CHEBI:49883"/>
        <label>1</label>
    </ligand>
</feature>
<proteinExistence type="inferred from homology"/>